<dbReference type="EMBL" id="AM849034">
    <property type="protein sequence ID" value="CAQ03165.1"/>
    <property type="molecule type" value="Genomic_DNA"/>
</dbReference>
<dbReference type="RefSeq" id="WP_012300303.1">
    <property type="nucleotide sequence ID" value="NZ_MZMN01000003.1"/>
</dbReference>
<dbReference type="SMR" id="B0RDN6"/>
<dbReference type="STRING" id="31964.CMS3097"/>
<dbReference type="KEGG" id="cms:CMS3097"/>
<dbReference type="eggNOG" id="COG0238">
    <property type="taxonomic scope" value="Bacteria"/>
</dbReference>
<dbReference type="HOGENOM" id="CLU_148710_0_3_11"/>
<dbReference type="OrthoDB" id="9812008at2"/>
<dbReference type="Proteomes" id="UP000001318">
    <property type="component" value="Chromosome"/>
</dbReference>
<dbReference type="GO" id="GO:0022627">
    <property type="term" value="C:cytosolic small ribosomal subunit"/>
    <property type="evidence" value="ECO:0007669"/>
    <property type="project" value="TreeGrafter"/>
</dbReference>
<dbReference type="GO" id="GO:0070181">
    <property type="term" value="F:small ribosomal subunit rRNA binding"/>
    <property type="evidence" value="ECO:0007669"/>
    <property type="project" value="TreeGrafter"/>
</dbReference>
<dbReference type="GO" id="GO:0003735">
    <property type="term" value="F:structural constituent of ribosome"/>
    <property type="evidence" value="ECO:0007669"/>
    <property type="project" value="InterPro"/>
</dbReference>
<dbReference type="GO" id="GO:0006412">
    <property type="term" value="P:translation"/>
    <property type="evidence" value="ECO:0007669"/>
    <property type="project" value="UniProtKB-UniRule"/>
</dbReference>
<dbReference type="Gene3D" id="4.10.640.10">
    <property type="entry name" value="Ribosomal protein S18"/>
    <property type="match status" value="1"/>
</dbReference>
<dbReference type="HAMAP" id="MF_00270">
    <property type="entry name" value="Ribosomal_bS18"/>
    <property type="match status" value="1"/>
</dbReference>
<dbReference type="InterPro" id="IPR001648">
    <property type="entry name" value="Ribosomal_bS18"/>
</dbReference>
<dbReference type="InterPro" id="IPR018275">
    <property type="entry name" value="Ribosomal_bS18_CS"/>
</dbReference>
<dbReference type="InterPro" id="IPR036870">
    <property type="entry name" value="Ribosomal_bS18_sf"/>
</dbReference>
<dbReference type="NCBIfam" id="TIGR00165">
    <property type="entry name" value="S18"/>
    <property type="match status" value="1"/>
</dbReference>
<dbReference type="PANTHER" id="PTHR13479">
    <property type="entry name" value="30S RIBOSOMAL PROTEIN S18"/>
    <property type="match status" value="1"/>
</dbReference>
<dbReference type="PANTHER" id="PTHR13479:SF40">
    <property type="entry name" value="SMALL RIBOSOMAL SUBUNIT PROTEIN BS18M"/>
    <property type="match status" value="1"/>
</dbReference>
<dbReference type="Pfam" id="PF01084">
    <property type="entry name" value="Ribosomal_S18"/>
    <property type="match status" value="1"/>
</dbReference>
<dbReference type="PRINTS" id="PR00974">
    <property type="entry name" value="RIBOSOMALS18"/>
</dbReference>
<dbReference type="SUPFAM" id="SSF46911">
    <property type="entry name" value="Ribosomal protein S18"/>
    <property type="match status" value="1"/>
</dbReference>
<dbReference type="PROSITE" id="PS00057">
    <property type="entry name" value="RIBOSOMAL_S18"/>
    <property type="match status" value="1"/>
</dbReference>
<keyword id="KW-0687">Ribonucleoprotein</keyword>
<keyword id="KW-0689">Ribosomal protein</keyword>
<keyword id="KW-0694">RNA-binding</keyword>
<keyword id="KW-0699">rRNA-binding</keyword>
<feature type="chain" id="PRO_1000078695" description="Small ribosomal subunit protein bS18">
    <location>
        <begin position="1"/>
        <end position="87"/>
    </location>
</feature>
<feature type="region of interest" description="Disordered" evidence="2">
    <location>
        <begin position="1"/>
        <end position="23"/>
    </location>
</feature>
<feature type="compositionally biased region" description="Basic and acidic residues" evidence="2">
    <location>
        <begin position="1"/>
        <end position="10"/>
    </location>
</feature>
<evidence type="ECO:0000255" key="1">
    <source>
        <dbReference type="HAMAP-Rule" id="MF_00270"/>
    </source>
</evidence>
<evidence type="ECO:0000256" key="2">
    <source>
        <dbReference type="SAM" id="MobiDB-lite"/>
    </source>
</evidence>
<evidence type="ECO:0000305" key="3"/>
<gene>
    <name evidence="1" type="primary">rpsR</name>
    <name type="ordered locus">CMS3097</name>
</gene>
<accession>B0RDN6</accession>
<proteinExistence type="inferred from homology"/>
<reference key="1">
    <citation type="journal article" date="2008" name="J. Bacteriol.">
        <title>Genome of the actinomycete plant pathogen Clavibacter michiganensis subsp. sepedonicus suggests recent niche adaptation.</title>
        <authorList>
            <person name="Bentley S.D."/>
            <person name="Corton C."/>
            <person name="Brown S.E."/>
            <person name="Barron A."/>
            <person name="Clark L."/>
            <person name="Doggett J."/>
            <person name="Harris B."/>
            <person name="Ormond D."/>
            <person name="Quail M.A."/>
            <person name="May G."/>
            <person name="Francis D."/>
            <person name="Knudson D."/>
            <person name="Parkhill J."/>
            <person name="Ishimaru C.A."/>
        </authorList>
    </citation>
    <scope>NUCLEOTIDE SEQUENCE [LARGE SCALE GENOMIC DNA]</scope>
    <source>
        <strain>ATCC 33113 / DSM 20744 / JCM 9667 / LMG 2889 / ICMP 2535 / C-1</strain>
    </source>
</reference>
<protein>
    <recommendedName>
        <fullName evidence="1">Small ribosomal subunit protein bS18</fullName>
    </recommendedName>
    <alternativeName>
        <fullName evidence="3">30S ribosomal protein S18</fullName>
    </alternativeName>
</protein>
<organism>
    <name type="scientific">Clavibacter sepedonicus</name>
    <name type="common">Clavibacter michiganensis subsp. sepedonicus</name>
    <dbReference type="NCBI Taxonomy" id="31964"/>
    <lineage>
        <taxon>Bacteria</taxon>
        <taxon>Bacillati</taxon>
        <taxon>Actinomycetota</taxon>
        <taxon>Actinomycetes</taxon>
        <taxon>Micrococcales</taxon>
        <taxon>Microbacteriaceae</taxon>
        <taxon>Clavibacter</taxon>
    </lineage>
</organism>
<sequence length="87" mass="9492">MAGKSSGDRRKLLRGAKVGKNAAPAKSIRVGVIDYKDVATLRKFISERGKIRARRITGVSVQEQRLIARAVKNAREMALLPYAGSGR</sequence>
<name>RS18_CLASE</name>
<comment type="function">
    <text evidence="1">Binds as a heterodimer with protein bS6 to the central domain of the 16S rRNA, where it helps stabilize the platform of the 30S subunit.</text>
</comment>
<comment type="subunit">
    <text evidence="1">Part of the 30S ribosomal subunit. Forms a tight heterodimer with protein bS6.</text>
</comment>
<comment type="similarity">
    <text evidence="1">Belongs to the bacterial ribosomal protein bS18 family.</text>
</comment>